<protein>
    <recommendedName>
        <fullName evidence="1">DNA-directed RNA polymerase subunit beta'</fullName>
        <ecNumber evidence="1">2.7.7.6</ecNumber>
    </recommendedName>
    <alternativeName>
        <fullName evidence="1">PEP</fullName>
    </alternativeName>
    <alternativeName>
        <fullName evidence="1">Plastid-encoded RNA polymerase subunit beta'</fullName>
        <shortName evidence="1">RNA polymerase subunit beta'</shortName>
    </alternativeName>
</protein>
<geneLocation type="chloroplast"/>
<keyword id="KW-0150">Chloroplast</keyword>
<keyword id="KW-0240">DNA-directed RNA polymerase</keyword>
<keyword id="KW-0460">Magnesium</keyword>
<keyword id="KW-0479">Metal-binding</keyword>
<keyword id="KW-0548">Nucleotidyltransferase</keyword>
<keyword id="KW-0934">Plastid</keyword>
<keyword id="KW-0804">Transcription</keyword>
<keyword id="KW-0808">Transferase</keyword>
<keyword id="KW-0862">Zinc</keyword>
<sequence length="691" mass="79469">MIDRYKHQQLRIGLVSPEQISAWATKILPNGEIVGEVTKPSILHYKTNKAEKGGLFCERIFGPQKSGICACGNYRVIGDEKEDPKFCEQCGVEFVDSRIRRYQMGYIKLACPVTHVWYLKRLPSYIANLLDKPLKELEGLVYRDFSFARPITKKPTFLRLRGLFEYEIKSWKYSIPLFFTIQGFDTFRNREISTGAGAIREQLVDLDLRIILDNSLVEWKELGEEGPTGNEWEDQKVRRRRGFLVRRMELAKHFIRTNIEPEWMVLCLLPVLPPDLRPVIQIAEGKVMSSDITKLYQRVIYRNKILTDLLTRSVSTPGDLVTSQEKLVQEAVDALLDNGTRGQPMRDGQNKVYKSLSDIIEGKEGRFRQTLLGKRVDYSGRSVIVVGPSLSLYRCGLPREIAIELFQTFVIRGLIRQDPASNIKVAKSQIREKEPIVWEILQEVMQGHPVLLNRAPTLHRLGIQAFQPVLVEGRAICLHPLVCKGFNADFDGDQMAVHVPLSLEAQAEARLLMFSHMNLLSPAIGDPISIPTQDMLVGLYVLTSGNRRGICVNRYNPWNHRNYENQRSKNNNYRYTKEPLFSNSYDAIGAYRQKRIKLDSPLWLRWPLDQRVIASRESPIEVHYESLGTYYEIYGHYLIVRSIKKEILFLYIRTTVGHISLYREIEEAIEGFSQACSSSYGTYTKLSNSRI</sequence>
<comment type="function">
    <text evidence="1">DNA-dependent RNA polymerase catalyzes the transcription of DNA into RNA using the four ribonucleoside triphosphates as substrates.</text>
</comment>
<comment type="catalytic activity">
    <reaction evidence="1">
        <text>RNA(n) + a ribonucleoside 5'-triphosphate = RNA(n+1) + diphosphate</text>
        <dbReference type="Rhea" id="RHEA:21248"/>
        <dbReference type="Rhea" id="RHEA-COMP:14527"/>
        <dbReference type="Rhea" id="RHEA-COMP:17342"/>
        <dbReference type="ChEBI" id="CHEBI:33019"/>
        <dbReference type="ChEBI" id="CHEBI:61557"/>
        <dbReference type="ChEBI" id="CHEBI:140395"/>
        <dbReference type="EC" id="2.7.7.6"/>
    </reaction>
</comment>
<comment type="cofactor">
    <cofactor evidence="1">
        <name>Mg(2+)</name>
        <dbReference type="ChEBI" id="CHEBI:18420"/>
    </cofactor>
    <text evidence="1">Binds 1 Mg(2+) ion per subunit.</text>
</comment>
<comment type="cofactor">
    <cofactor evidence="1">
        <name>Zn(2+)</name>
        <dbReference type="ChEBI" id="CHEBI:29105"/>
    </cofactor>
    <text evidence="1">Binds 1 Zn(2+) ion per subunit.</text>
</comment>
<comment type="subunit">
    <text evidence="1">In plastids the minimal PEP RNA polymerase catalytic core is composed of four subunits: alpha, beta, beta', and beta''. When a (nuclear-encoded) sigma factor is associated with the core the holoenzyme is formed, which can initiate transcription.</text>
</comment>
<comment type="subcellular location">
    <subcellularLocation>
        <location evidence="1">Plastid</location>
        <location evidence="1">Chloroplast</location>
    </subcellularLocation>
</comment>
<comment type="similarity">
    <text evidence="1">Belongs to the RNA polymerase beta' chain family. RpoC1 subfamily.</text>
</comment>
<comment type="sequence caution" evidence="2">
    <conflict type="erroneous initiation">
        <sequence resource="EMBL-CDS" id="ABG74619"/>
    </conflict>
    <text>Extended N-terminus.</text>
</comment>
<reference key="1">
    <citation type="journal article" date="2007" name="Mol. Biol. Evol.">
        <title>Gene relocations within chloroplast genomes of Jasminum and Menodora (Oleaceae) are due to multiple, overlapping inversions.</title>
        <authorList>
            <person name="Lee H.-L."/>
            <person name="Jansen R.K."/>
            <person name="Chumley T.W."/>
            <person name="Kim K.-J."/>
        </authorList>
    </citation>
    <scope>NUCLEOTIDE SEQUENCE [LARGE SCALE GENOMIC DNA]</scope>
</reference>
<gene>
    <name evidence="1" type="primary">rpoC1</name>
    <name type="ORF">JNC0224</name>
</gene>
<proteinExistence type="inferred from homology"/>
<feature type="chain" id="PRO_0000277170" description="DNA-directed RNA polymerase subunit beta'">
    <location>
        <begin position="1"/>
        <end position="691"/>
    </location>
</feature>
<feature type="binding site" evidence="1">
    <location>
        <position position="69"/>
    </location>
    <ligand>
        <name>Zn(2+)</name>
        <dbReference type="ChEBI" id="CHEBI:29105"/>
    </ligand>
</feature>
<feature type="binding site" evidence="1">
    <location>
        <position position="71"/>
    </location>
    <ligand>
        <name>Zn(2+)</name>
        <dbReference type="ChEBI" id="CHEBI:29105"/>
    </ligand>
</feature>
<feature type="binding site" evidence="1">
    <location>
        <position position="87"/>
    </location>
    <ligand>
        <name>Zn(2+)</name>
        <dbReference type="ChEBI" id="CHEBI:29105"/>
    </ligand>
</feature>
<feature type="binding site" evidence="1">
    <location>
        <position position="90"/>
    </location>
    <ligand>
        <name>Zn(2+)</name>
        <dbReference type="ChEBI" id="CHEBI:29105"/>
    </ligand>
</feature>
<feature type="binding site" evidence="1">
    <location>
        <position position="489"/>
    </location>
    <ligand>
        <name>Mg(2+)</name>
        <dbReference type="ChEBI" id="CHEBI:18420"/>
    </ligand>
</feature>
<feature type="binding site" evidence="1">
    <location>
        <position position="491"/>
    </location>
    <ligand>
        <name>Mg(2+)</name>
        <dbReference type="ChEBI" id="CHEBI:18420"/>
    </ligand>
</feature>
<feature type="binding site" evidence="1">
    <location>
        <position position="493"/>
    </location>
    <ligand>
        <name>Mg(2+)</name>
        <dbReference type="ChEBI" id="CHEBI:18420"/>
    </ligand>
</feature>
<accession>Q06RE0</accession>
<organism>
    <name type="scientific">Jasminum nudiflorum</name>
    <name type="common">Winter jasmine</name>
    <dbReference type="NCBI Taxonomy" id="126431"/>
    <lineage>
        <taxon>Eukaryota</taxon>
        <taxon>Viridiplantae</taxon>
        <taxon>Streptophyta</taxon>
        <taxon>Embryophyta</taxon>
        <taxon>Tracheophyta</taxon>
        <taxon>Spermatophyta</taxon>
        <taxon>Magnoliopsida</taxon>
        <taxon>eudicotyledons</taxon>
        <taxon>Gunneridae</taxon>
        <taxon>Pentapetalae</taxon>
        <taxon>asterids</taxon>
        <taxon>lamiids</taxon>
        <taxon>Lamiales</taxon>
        <taxon>Oleaceae</taxon>
        <taxon>Jasmineae</taxon>
        <taxon>Jasminum</taxon>
    </lineage>
</organism>
<evidence type="ECO:0000255" key="1">
    <source>
        <dbReference type="HAMAP-Rule" id="MF_01323"/>
    </source>
</evidence>
<evidence type="ECO:0000305" key="2"/>
<dbReference type="EC" id="2.7.7.6" evidence="1"/>
<dbReference type="EMBL" id="DQ673255">
    <property type="protein sequence ID" value="ABG74619.1"/>
    <property type="status" value="ALT_INIT"/>
    <property type="molecule type" value="Genomic_DNA"/>
</dbReference>
<dbReference type="RefSeq" id="YP_778481.2">
    <property type="nucleotide sequence ID" value="NC_008407.1"/>
</dbReference>
<dbReference type="SMR" id="Q06RE0"/>
<dbReference type="GeneID" id="4319743"/>
<dbReference type="GO" id="GO:0009507">
    <property type="term" value="C:chloroplast"/>
    <property type="evidence" value="ECO:0007669"/>
    <property type="project" value="UniProtKB-SubCell"/>
</dbReference>
<dbReference type="GO" id="GO:0000428">
    <property type="term" value="C:DNA-directed RNA polymerase complex"/>
    <property type="evidence" value="ECO:0007669"/>
    <property type="project" value="UniProtKB-KW"/>
</dbReference>
<dbReference type="GO" id="GO:0005739">
    <property type="term" value="C:mitochondrion"/>
    <property type="evidence" value="ECO:0007669"/>
    <property type="project" value="GOC"/>
</dbReference>
<dbReference type="GO" id="GO:0003677">
    <property type="term" value="F:DNA binding"/>
    <property type="evidence" value="ECO:0007669"/>
    <property type="project" value="UniProtKB-UniRule"/>
</dbReference>
<dbReference type="GO" id="GO:0003899">
    <property type="term" value="F:DNA-directed RNA polymerase activity"/>
    <property type="evidence" value="ECO:0007669"/>
    <property type="project" value="UniProtKB-UniRule"/>
</dbReference>
<dbReference type="GO" id="GO:0000287">
    <property type="term" value="F:magnesium ion binding"/>
    <property type="evidence" value="ECO:0007669"/>
    <property type="project" value="UniProtKB-UniRule"/>
</dbReference>
<dbReference type="GO" id="GO:0008270">
    <property type="term" value="F:zinc ion binding"/>
    <property type="evidence" value="ECO:0007669"/>
    <property type="project" value="UniProtKB-UniRule"/>
</dbReference>
<dbReference type="GO" id="GO:0006351">
    <property type="term" value="P:DNA-templated transcription"/>
    <property type="evidence" value="ECO:0007669"/>
    <property type="project" value="UniProtKB-UniRule"/>
</dbReference>
<dbReference type="FunFam" id="4.10.860.120:FF:000007">
    <property type="entry name" value="DNA-directed RNA polymerase subunit gamma"/>
    <property type="match status" value="1"/>
</dbReference>
<dbReference type="Gene3D" id="1.10.40.90">
    <property type="match status" value="1"/>
</dbReference>
<dbReference type="Gene3D" id="2.40.40.20">
    <property type="match status" value="1"/>
</dbReference>
<dbReference type="Gene3D" id="4.10.860.120">
    <property type="entry name" value="RNA polymerase II, clamp domain"/>
    <property type="match status" value="1"/>
</dbReference>
<dbReference type="Gene3D" id="1.10.274.100">
    <property type="entry name" value="RNA polymerase Rpb1, domain 3"/>
    <property type="match status" value="1"/>
</dbReference>
<dbReference type="HAMAP" id="MF_01323">
    <property type="entry name" value="RNApol_bact_RpoC1"/>
    <property type="match status" value="1"/>
</dbReference>
<dbReference type="InterPro" id="IPR045867">
    <property type="entry name" value="DNA-dir_RpoC_beta_prime"/>
</dbReference>
<dbReference type="InterPro" id="IPR000722">
    <property type="entry name" value="RNA_pol_asu"/>
</dbReference>
<dbReference type="InterPro" id="IPR006592">
    <property type="entry name" value="RNA_pol_N"/>
</dbReference>
<dbReference type="InterPro" id="IPR007080">
    <property type="entry name" value="RNA_pol_Rpb1_1"/>
</dbReference>
<dbReference type="InterPro" id="IPR042102">
    <property type="entry name" value="RNA_pol_Rpb1_3_sf"/>
</dbReference>
<dbReference type="InterPro" id="IPR044893">
    <property type="entry name" value="RNA_pol_Rpb1_clamp_domain"/>
</dbReference>
<dbReference type="InterPro" id="IPR034678">
    <property type="entry name" value="RNApol_RpoC1"/>
</dbReference>
<dbReference type="PANTHER" id="PTHR19376">
    <property type="entry name" value="DNA-DIRECTED RNA POLYMERASE"/>
    <property type="match status" value="1"/>
</dbReference>
<dbReference type="PANTHER" id="PTHR19376:SF54">
    <property type="entry name" value="DNA-DIRECTED RNA POLYMERASE SUBUNIT BETA"/>
    <property type="match status" value="1"/>
</dbReference>
<dbReference type="Pfam" id="PF04997">
    <property type="entry name" value="RNA_pol_Rpb1_1"/>
    <property type="match status" value="1"/>
</dbReference>
<dbReference type="Pfam" id="PF00623">
    <property type="entry name" value="RNA_pol_Rpb1_2"/>
    <property type="match status" value="2"/>
</dbReference>
<dbReference type="SMART" id="SM00663">
    <property type="entry name" value="RPOLA_N"/>
    <property type="match status" value="1"/>
</dbReference>
<dbReference type="SUPFAM" id="SSF64484">
    <property type="entry name" value="beta and beta-prime subunits of DNA dependent RNA-polymerase"/>
    <property type="match status" value="1"/>
</dbReference>
<name>RPOC1_JASNU</name>